<protein>
    <recommendedName>
        <fullName evidence="1">Large ribosomal subunit protein bL31B</fullName>
    </recommendedName>
    <alternativeName>
        <fullName evidence="2">50S ribosomal protein L31 type B</fullName>
    </alternativeName>
</protein>
<sequence length="84" mass="9723">MKQGIHPEYHQVIFLDTTTNFKFLSGSTKTSSEMMEWEDGKEYPVIRLDISSDSHPFYTGRQKFAAADGRVERFNKKFGLKSNN</sequence>
<accession>Q2FWD8</accession>
<evidence type="ECO:0000255" key="1">
    <source>
        <dbReference type="HAMAP-Rule" id="MF_00502"/>
    </source>
</evidence>
<evidence type="ECO:0000305" key="2"/>
<feature type="chain" id="PRO_0000259121" description="Large ribosomal subunit protein bL31B">
    <location>
        <begin position="1"/>
        <end position="84"/>
    </location>
</feature>
<keyword id="KW-0002">3D-structure</keyword>
<keyword id="KW-1185">Reference proteome</keyword>
<keyword id="KW-0687">Ribonucleoprotein</keyword>
<keyword id="KW-0689">Ribosomal protein</keyword>
<dbReference type="EMBL" id="CP000253">
    <property type="protein sequence ID" value="ABD31392.1"/>
    <property type="molecule type" value="Genomic_DNA"/>
</dbReference>
<dbReference type="RefSeq" id="WP_000808968.1">
    <property type="nucleotide sequence ID" value="NZ_LS483365.1"/>
</dbReference>
<dbReference type="RefSeq" id="YP_500837.1">
    <property type="nucleotide sequence ID" value="NC_007795.1"/>
</dbReference>
<dbReference type="PDB" id="5LI0">
    <property type="method" value="EM"/>
    <property type="resolution" value="3.80 A"/>
    <property type="chains" value="3=1-84"/>
</dbReference>
<dbReference type="PDB" id="5ND8">
    <property type="method" value="EM"/>
    <property type="resolution" value="3.70 A"/>
    <property type="chains" value="3=1-84"/>
</dbReference>
<dbReference type="PDB" id="5ND9">
    <property type="method" value="EM"/>
    <property type="resolution" value="3.70 A"/>
    <property type="chains" value="3=1-84"/>
</dbReference>
<dbReference type="PDB" id="5TCU">
    <property type="method" value="EM"/>
    <property type="resolution" value="3.90 A"/>
    <property type="chains" value="LF=1-74"/>
</dbReference>
<dbReference type="PDB" id="6YEF">
    <property type="method" value="EM"/>
    <property type="resolution" value="3.20 A"/>
    <property type="chains" value="3=1-84"/>
</dbReference>
<dbReference type="PDB" id="7NHL">
    <property type="method" value="EM"/>
    <property type="resolution" value="3.10 A"/>
    <property type="chains" value="4=1-84"/>
</dbReference>
<dbReference type="PDB" id="7NHM">
    <property type="method" value="EM"/>
    <property type="resolution" value="3.10 A"/>
    <property type="chains" value="4=1-84"/>
</dbReference>
<dbReference type="PDB" id="8P2F">
    <property type="method" value="EM"/>
    <property type="resolution" value="2.44 A"/>
    <property type="chains" value="4=1-84"/>
</dbReference>
<dbReference type="PDB" id="8P2G">
    <property type="method" value="EM"/>
    <property type="resolution" value="2.02 A"/>
    <property type="chains" value="4=1-84"/>
</dbReference>
<dbReference type="PDB" id="8P2H">
    <property type="method" value="EM"/>
    <property type="resolution" value="2.49 A"/>
    <property type="chains" value="4=1-84"/>
</dbReference>
<dbReference type="PDBsum" id="5LI0"/>
<dbReference type="PDBsum" id="5ND8"/>
<dbReference type="PDBsum" id="5ND9"/>
<dbReference type="PDBsum" id="5TCU"/>
<dbReference type="PDBsum" id="6YEF"/>
<dbReference type="PDBsum" id="7NHL"/>
<dbReference type="PDBsum" id="7NHM"/>
<dbReference type="PDBsum" id="8P2F"/>
<dbReference type="PDBsum" id="8P2G"/>
<dbReference type="PDBsum" id="8P2H"/>
<dbReference type="EMDB" id="EMD-10791"/>
<dbReference type="EMDB" id="EMD-12332"/>
<dbReference type="EMDB" id="EMD-12333"/>
<dbReference type="EMDB" id="EMD-17363"/>
<dbReference type="EMDB" id="EMD-17364"/>
<dbReference type="EMDB" id="EMD-17365"/>
<dbReference type="EMDB" id="EMD-3624"/>
<dbReference type="EMDB" id="EMD-3625"/>
<dbReference type="EMDB" id="EMD-4050"/>
<dbReference type="EMDB" id="EMD-8402"/>
<dbReference type="SMR" id="Q2FWD8"/>
<dbReference type="IntAct" id="Q2FWD8">
    <property type="interactions" value="1"/>
</dbReference>
<dbReference type="STRING" id="93061.SAOUHSC_02361"/>
<dbReference type="PaxDb" id="1280-SAXN108_2365"/>
<dbReference type="GeneID" id="3919404"/>
<dbReference type="KEGG" id="sao:SAOUHSC_02361"/>
<dbReference type="PATRIC" id="fig|93061.5.peg.2138"/>
<dbReference type="eggNOG" id="COG0254">
    <property type="taxonomic scope" value="Bacteria"/>
</dbReference>
<dbReference type="HOGENOM" id="CLU_114306_2_2_9"/>
<dbReference type="OrthoDB" id="9803251at2"/>
<dbReference type="PRO" id="PR:Q2FWD8"/>
<dbReference type="Proteomes" id="UP000008816">
    <property type="component" value="Chromosome"/>
</dbReference>
<dbReference type="GO" id="GO:1990904">
    <property type="term" value="C:ribonucleoprotein complex"/>
    <property type="evidence" value="ECO:0007669"/>
    <property type="project" value="UniProtKB-KW"/>
</dbReference>
<dbReference type="GO" id="GO:0005840">
    <property type="term" value="C:ribosome"/>
    <property type="evidence" value="ECO:0007669"/>
    <property type="project" value="UniProtKB-KW"/>
</dbReference>
<dbReference type="GO" id="GO:0003735">
    <property type="term" value="F:structural constituent of ribosome"/>
    <property type="evidence" value="ECO:0007669"/>
    <property type="project" value="InterPro"/>
</dbReference>
<dbReference type="GO" id="GO:0006412">
    <property type="term" value="P:translation"/>
    <property type="evidence" value="ECO:0007669"/>
    <property type="project" value="UniProtKB-UniRule"/>
</dbReference>
<dbReference type="Gene3D" id="4.10.830.30">
    <property type="entry name" value="Ribosomal protein L31"/>
    <property type="match status" value="1"/>
</dbReference>
<dbReference type="HAMAP" id="MF_00502">
    <property type="entry name" value="Ribosomal_bL31_2"/>
    <property type="match status" value="1"/>
</dbReference>
<dbReference type="InterPro" id="IPR034704">
    <property type="entry name" value="Ribosomal_bL28/bL31-like_sf"/>
</dbReference>
<dbReference type="InterPro" id="IPR002150">
    <property type="entry name" value="Ribosomal_bL31"/>
</dbReference>
<dbReference type="InterPro" id="IPR027493">
    <property type="entry name" value="Ribosomal_bL31_B"/>
</dbReference>
<dbReference type="InterPro" id="IPR042105">
    <property type="entry name" value="Ribosomal_bL31_sf"/>
</dbReference>
<dbReference type="NCBIfam" id="TIGR00105">
    <property type="entry name" value="L31"/>
    <property type="match status" value="1"/>
</dbReference>
<dbReference type="NCBIfam" id="NF002462">
    <property type="entry name" value="PRK01678.1"/>
    <property type="match status" value="1"/>
</dbReference>
<dbReference type="PANTHER" id="PTHR33280">
    <property type="entry name" value="50S RIBOSOMAL PROTEIN L31, CHLOROPLASTIC"/>
    <property type="match status" value="1"/>
</dbReference>
<dbReference type="PANTHER" id="PTHR33280:SF1">
    <property type="entry name" value="LARGE RIBOSOMAL SUBUNIT PROTEIN BL31C"/>
    <property type="match status" value="1"/>
</dbReference>
<dbReference type="Pfam" id="PF01197">
    <property type="entry name" value="Ribosomal_L31"/>
    <property type="match status" value="1"/>
</dbReference>
<dbReference type="PRINTS" id="PR01249">
    <property type="entry name" value="RIBOSOMALL31"/>
</dbReference>
<dbReference type="SUPFAM" id="SSF143800">
    <property type="entry name" value="L28p-like"/>
    <property type="match status" value="1"/>
</dbReference>
<dbReference type="PROSITE" id="PS01143">
    <property type="entry name" value="RIBOSOMAL_L31"/>
    <property type="match status" value="1"/>
</dbReference>
<name>RL31B_STAA8</name>
<comment type="subunit">
    <text evidence="1">Part of the 50S ribosomal subunit.</text>
</comment>
<comment type="similarity">
    <text evidence="1">Belongs to the bacterial ribosomal protein bL31 family. Type B subfamily.</text>
</comment>
<reference key="1">
    <citation type="book" date="2006" name="Gram positive pathogens, 2nd edition">
        <title>The Staphylococcus aureus NCTC 8325 genome.</title>
        <editorList>
            <person name="Fischetti V."/>
            <person name="Novick R."/>
            <person name="Ferretti J."/>
            <person name="Portnoy D."/>
            <person name="Rood J."/>
        </editorList>
        <authorList>
            <person name="Gillaspy A.F."/>
            <person name="Worrell V."/>
            <person name="Orvis J."/>
            <person name="Roe B.A."/>
            <person name="Dyer D.W."/>
            <person name="Iandolo J.J."/>
        </authorList>
    </citation>
    <scope>NUCLEOTIDE SEQUENCE [LARGE SCALE GENOMIC DNA]</scope>
    <source>
        <strain>NCTC 8325 / PS 47</strain>
    </source>
</reference>
<proteinExistence type="evidence at protein level"/>
<organism>
    <name type="scientific">Staphylococcus aureus (strain NCTC 8325 / PS 47)</name>
    <dbReference type="NCBI Taxonomy" id="93061"/>
    <lineage>
        <taxon>Bacteria</taxon>
        <taxon>Bacillati</taxon>
        <taxon>Bacillota</taxon>
        <taxon>Bacilli</taxon>
        <taxon>Bacillales</taxon>
        <taxon>Staphylococcaceae</taxon>
        <taxon>Staphylococcus</taxon>
    </lineage>
</organism>
<gene>
    <name evidence="1" type="primary">rpmE2</name>
    <name type="ordered locus">SAOUHSC_02361</name>
</gene>